<keyword id="KW-0963">Cytoplasm</keyword>
<keyword id="KW-0489">Methyltransferase</keyword>
<keyword id="KW-0694">RNA-binding</keyword>
<keyword id="KW-0698">rRNA processing</keyword>
<keyword id="KW-0949">S-adenosyl-L-methionine</keyword>
<keyword id="KW-0808">Transferase</keyword>
<organism>
    <name type="scientific">Escherichia coli (strain SE11)</name>
    <dbReference type="NCBI Taxonomy" id="409438"/>
    <lineage>
        <taxon>Bacteria</taxon>
        <taxon>Pseudomonadati</taxon>
        <taxon>Pseudomonadota</taxon>
        <taxon>Gammaproteobacteria</taxon>
        <taxon>Enterobacterales</taxon>
        <taxon>Enterobacteriaceae</taxon>
        <taxon>Escherichia</taxon>
    </lineage>
</organism>
<gene>
    <name evidence="1" type="primary">rsmB</name>
    <name evidence="1" type="synonym">sun</name>
    <name type="ordered locus">ECSE_3563</name>
</gene>
<reference key="1">
    <citation type="journal article" date="2008" name="DNA Res.">
        <title>Complete genome sequence and comparative analysis of the wild-type commensal Escherichia coli strain SE11 isolated from a healthy adult.</title>
        <authorList>
            <person name="Oshima K."/>
            <person name="Toh H."/>
            <person name="Ogura Y."/>
            <person name="Sasamoto H."/>
            <person name="Morita H."/>
            <person name="Park S.-H."/>
            <person name="Ooka T."/>
            <person name="Iyoda S."/>
            <person name="Taylor T.D."/>
            <person name="Hayashi T."/>
            <person name="Itoh K."/>
            <person name="Hattori M."/>
        </authorList>
    </citation>
    <scope>NUCLEOTIDE SEQUENCE [LARGE SCALE GENOMIC DNA]</scope>
    <source>
        <strain>SE11</strain>
    </source>
</reference>
<feature type="chain" id="PRO_1000188695" description="Ribosomal RNA small subunit methyltransferase B">
    <location>
        <begin position="1"/>
        <end position="429"/>
    </location>
</feature>
<feature type="active site" description="Nucleophile" evidence="1">
    <location>
        <position position="375"/>
    </location>
</feature>
<feature type="binding site" evidence="1">
    <location>
        <begin position="254"/>
        <end position="260"/>
    </location>
    <ligand>
        <name>S-adenosyl-L-methionine</name>
        <dbReference type="ChEBI" id="CHEBI:59789"/>
    </ligand>
</feature>
<feature type="binding site" evidence="1">
    <location>
        <position position="277"/>
    </location>
    <ligand>
        <name>S-adenosyl-L-methionine</name>
        <dbReference type="ChEBI" id="CHEBI:59789"/>
    </ligand>
</feature>
<feature type="binding site" evidence="1">
    <location>
        <position position="303"/>
    </location>
    <ligand>
        <name>S-adenosyl-L-methionine</name>
        <dbReference type="ChEBI" id="CHEBI:59789"/>
    </ligand>
</feature>
<feature type="binding site" evidence="1">
    <location>
        <position position="322"/>
    </location>
    <ligand>
        <name>S-adenosyl-L-methionine</name>
        <dbReference type="ChEBI" id="CHEBI:59789"/>
    </ligand>
</feature>
<dbReference type="EC" id="2.1.1.176" evidence="1"/>
<dbReference type="EMBL" id="AP009240">
    <property type="protein sequence ID" value="BAG79087.1"/>
    <property type="molecule type" value="Genomic_DNA"/>
</dbReference>
<dbReference type="RefSeq" id="WP_000744779.1">
    <property type="nucleotide sequence ID" value="NC_011415.1"/>
</dbReference>
<dbReference type="SMR" id="B6I202"/>
<dbReference type="GeneID" id="75204129"/>
<dbReference type="KEGG" id="ecy:ECSE_3563"/>
<dbReference type="HOGENOM" id="CLU_005316_0_4_6"/>
<dbReference type="Proteomes" id="UP000008199">
    <property type="component" value="Chromosome"/>
</dbReference>
<dbReference type="GO" id="GO:0005829">
    <property type="term" value="C:cytosol"/>
    <property type="evidence" value="ECO:0007669"/>
    <property type="project" value="TreeGrafter"/>
</dbReference>
<dbReference type="GO" id="GO:0003723">
    <property type="term" value="F:RNA binding"/>
    <property type="evidence" value="ECO:0007669"/>
    <property type="project" value="UniProtKB-KW"/>
</dbReference>
<dbReference type="GO" id="GO:0009383">
    <property type="term" value="F:rRNA (cytosine-C5-)-methyltransferase activity"/>
    <property type="evidence" value="ECO:0007669"/>
    <property type="project" value="TreeGrafter"/>
</dbReference>
<dbReference type="GO" id="GO:0006355">
    <property type="term" value="P:regulation of DNA-templated transcription"/>
    <property type="evidence" value="ECO:0007669"/>
    <property type="project" value="InterPro"/>
</dbReference>
<dbReference type="GO" id="GO:0070475">
    <property type="term" value="P:rRNA base methylation"/>
    <property type="evidence" value="ECO:0007669"/>
    <property type="project" value="TreeGrafter"/>
</dbReference>
<dbReference type="CDD" id="cd02440">
    <property type="entry name" value="AdoMet_MTases"/>
    <property type="match status" value="1"/>
</dbReference>
<dbReference type="CDD" id="cd00620">
    <property type="entry name" value="Methyltransferase_Sun"/>
    <property type="match status" value="1"/>
</dbReference>
<dbReference type="FunFam" id="1.10.287.730:FF:000001">
    <property type="entry name" value="Ribosomal RNA small subunit methyltransferase B"/>
    <property type="match status" value="1"/>
</dbReference>
<dbReference type="FunFam" id="1.10.940.10:FF:000002">
    <property type="entry name" value="Ribosomal RNA small subunit methyltransferase B"/>
    <property type="match status" value="1"/>
</dbReference>
<dbReference type="FunFam" id="3.30.70.1170:FF:000002">
    <property type="entry name" value="Ribosomal RNA small subunit methyltransferase B"/>
    <property type="match status" value="1"/>
</dbReference>
<dbReference type="FunFam" id="3.40.50.150:FF:000022">
    <property type="entry name" value="Ribosomal RNA small subunit methyltransferase B"/>
    <property type="match status" value="1"/>
</dbReference>
<dbReference type="Gene3D" id="1.10.287.730">
    <property type="entry name" value="Helix hairpin bin"/>
    <property type="match status" value="1"/>
</dbReference>
<dbReference type="Gene3D" id="1.10.940.10">
    <property type="entry name" value="NusB-like"/>
    <property type="match status" value="1"/>
</dbReference>
<dbReference type="Gene3D" id="3.30.70.1170">
    <property type="entry name" value="Sun protein, domain 3"/>
    <property type="match status" value="1"/>
</dbReference>
<dbReference type="Gene3D" id="3.40.50.150">
    <property type="entry name" value="Vaccinia Virus protein VP39"/>
    <property type="match status" value="1"/>
</dbReference>
<dbReference type="HAMAP" id="MF_01856">
    <property type="entry name" value="16SrRNA_methyltr_B"/>
    <property type="match status" value="1"/>
</dbReference>
<dbReference type="InterPro" id="IPR049560">
    <property type="entry name" value="MeTrfase_RsmB-F_NOP2_cat"/>
</dbReference>
<dbReference type="InterPro" id="IPR001678">
    <property type="entry name" value="MeTrfase_RsmB-F_NOP2_dom"/>
</dbReference>
<dbReference type="InterPro" id="IPR035926">
    <property type="entry name" value="NusB-like_sf"/>
</dbReference>
<dbReference type="InterPro" id="IPR006027">
    <property type="entry name" value="NusB_RsmB_TIM44"/>
</dbReference>
<dbReference type="InterPro" id="IPR023267">
    <property type="entry name" value="RCMT"/>
</dbReference>
<dbReference type="InterPro" id="IPR004573">
    <property type="entry name" value="rRNA_ssu_MeTfrase_B"/>
</dbReference>
<dbReference type="InterPro" id="IPR023541">
    <property type="entry name" value="rRNA_ssu_MeTfrase_B_ent"/>
</dbReference>
<dbReference type="InterPro" id="IPR054728">
    <property type="entry name" value="RsmB-like_ferredoxin"/>
</dbReference>
<dbReference type="InterPro" id="IPR048019">
    <property type="entry name" value="RsmB-like_N"/>
</dbReference>
<dbReference type="InterPro" id="IPR018314">
    <property type="entry name" value="RsmB/NOL1/NOP2-like_CS"/>
</dbReference>
<dbReference type="InterPro" id="IPR029063">
    <property type="entry name" value="SAM-dependent_MTases_sf"/>
</dbReference>
<dbReference type="NCBIfam" id="NF008149">
    <property type="entry name" value="PRK10901.1"/>
    <property type="match status" value="1"/>
</dbReference>
<dbReference type="NCBIfam" id="NF011494">
    <property type="entry name" value="PRK14902.1"/>
    <property type="match status" value="1"/>
</dbReference>
<dbReference type="NCBIfam" id="TIGR00563">
    <property type="entry name" value="rsmB"/>
    <property type="match status" value="1"/>
</dbReference>
<dbReference type="PANTHER" id="PTHR22807:SF61">
    <property type="entry name" value="NOL1_NOP2_SUN FAMILY PROTEIN _ ANTITERMINATION NUSB DOMAIN-CONTAINING PROTEIN"/>
    <property type="match status" value="1"/>
</dbReference>
<dbReference type="PANTHER" id="PTHR22807">
    <property type="entry name" value="NOP2 YEAST -RELATED NOL1/NOP2/FMU SUN DOMAIN-CONTAINING"/>
    <property type="match status" value="1"/>
</dbReference>
<dbReference type="Pfam" id="PF01189">
    <property type="entry name" value="Methyltr_RsmB-F"/>
    <property type="match status" value="1"/>
</dbReference>
<dbReference type="Pfam" id="PF01029">
    <property type="entry name" value="NusB"/>
    <property type="match status" value="1"/>
</dbReference>
<dbReference type="Pfam" id="PF22458">
    <property type="entry name" value="RsmF-B_ferredox"/>
    <property type="match status" value="1"/>
</dbReference>
<dbReference type="PRINTS" id="PR02008">
    <property type="entry name" value="RCMTFAMILY"/>
</dbReference>
<dbReference type="SUPFAM" id="SSF48013">
    <property type="entry name" value="NusB-like"/>
    <property type="match status" value="1"/>
</dbReference>
<dbReference type="SUPFAM" id="SSF53335">
    <property type="entry name" value="S-adenosyl-L-methionine-dependent methyltransferases"/>
    <property type="match status" value="1"/>
</dbReference>
<dbReference type="PROSITE" id="PS01153">
    <property type="entry name" value="NOL1_NOP2_SUN"/>
    <property type="match status" value="1"/>
</dbReference>
<dbReference type="PROSITE" id="PS51686">
    <property type="entry name" value="SAM_MT_RSMB_NOP"/>
    <property type="match status" value="1"/>
</dbReference>
<name>RSMB_ECOSE</name>
<accession>B6I202</accession>
<protein>
    <recommendedName>
        <fullName evidence="1">Ribosomal RNA small subunit methyltransferase B</fullName>
        <ecNumber evidence="1">2.1.1.176</ecNumber>
    </recommendedName>
    <alternativeName>
        <fullName evidence="1">16S rRNA m5C967 methyltransferase</fullName>
    </alternativeName>
    <alternativeName>
        <fullName evidence="1">rRNA (cytosine-C(5)-)-methyltransferase RsmB</fullName>
    </alternativeName>
</protein>
<sequence>MKKQRNLRSMAAQAVEQVVEQGQSLSNILPPLQQKVSDKDKALLQELCFGVLRTLSQLDWLINKLMARPMTGKQRTVHYLIMVGLYQLLYTRIPPHAALAETVEGAIAIKRPQLKGLINGVLRQFQRQQEELLAEFNASDARYLHPSWLLKRLQKAYPEQWQSIVEANNQRPPMWLRVNRTHHSRDSWLALLDEAGMKGFPHADYPDAVRLETPAPVHALPGFEDGWVTVQDASAQGCMTWLAPQNGEHILDLCAAPGGKTTHILEVAPEAQVVAVDIDEQRLSRVYDNLKRLGMKATVKQGDGRYPSQWCGEQQFDRILLDAPCSATGVIRRHPDIKWLRRDRDIPELAQLQSEILDAIWPHLKSGGTLVYATCSVLPEENSLQIKAFLQRTADAELCETGTPEQPGKQNLPGAEEGDGFFYAKLIKK</sequence>
<evidence type="ECO:0000255" key="1">
    <source>
        <dbReference type="HAMAP-Rule" id="MF_01856"/>
    </source>
</evidence>
<proteinExistence type="inferred from homology"/>
<comment type="function">
    <text evidence="1">Specifically methylates the cytosine at position 967 (m5C967) of 16S rRNA.</text>
</comment>
<comment type="catalytic activity">
    <reaction evidence="1">
        <text>cytidine(967) in 16S rRNA + S-adenosyl-L-methionine = 5-methylcytidine(967) in 16S rRNA + S-adenosyl-L-homocysteine + H(+)</text>
        <dbReference type="Rhea" id="RHEA:42748"/>
        <dbReference type="Rhea" id="RHEA-COMP:10219"/>
        <dbReference type="Rhea" id="RHEA-COMP:10220"/>
        <dbReference type="ChEBI" id="CHEBI:15378"/>
        <dbReference type="ChEBI" id="CHEBI:57856"/>
        <dbReference type="ChEBI" id="CHEBI:59789"/>
        <dbReference type="ChEBI" id="CHEBI:74483"/>
        <dbReference type="ChEBI" id="CHEBI:82748"/>
        <dbReference type="EC" id="2.1.1.176"/>
    </reaction>
</comment>
<comment type="subcellular location">
    <subcellularLocation>
        <location evidence="1">Cytoplasm</location>
    </subcellularLocation>
</comment>
<comment type="similarity">
    <text evidence="1">Belongs to the class I-like SAM-binding methyltransferase superfamily. RsmB/NOP family.</text>
</comment>